<keyword id="KW-0227">DNA damage</keyword>
<keyword id="KW-0234">DNA repair</keyword>
<keyword id="KW-0255">Endonuclease</keyword>
<keyword id="KW-0269">Exonuclease</keyword>
<keyword id="KW-0378">Hydrolase</keyword>
<keyword id="KW-0460">Magnesium</keyword>
<keyword id="KW-0464">Manganese</keyword>
<keyword id="KW-0479">Metal-binding</keyword>
<keyword id="KW-0496">Mitochondrion</keyword>
<keyword id="KW-0540">Nuclease</keyword>
<keyword id="KW-1185">Reference proteome</keyword>
<keyword id="KW-0809">Transit peptide</keyword>
<gene>
    <name evidence="6" type="primary">APE1</name>
    <name evidence="9" type="ORF">PF3D7_0305600</name>
</gene>
<proteinExistence type="evidence at protein level"/>
<protein>
    <recommendedName>
        <fullName evidence="3">DNA-(apurinic or apyrimidinic site) endonuclease</fullName>
        <shortName evidence="6">PfAPE1</shortName>
        <ecNumber evidence="5">3.1.11.2</ecNumber>
    </recommendedName>
</protein>
<evidence type="ECO:0000250" key="1">
    <source>
        <dbReference type="UniProtKB" id="A0A509ADV9"/>
    </source>
</evidence>
<evidence type="ECO:0000255" key="2">
    <source>
        <dbReference type="PROSITE-ProRule" id="PRU00764"/>
    </source>
</evidence>
<evidence type="ECO:0000255" key="3">
    <source>
        <dbReference type="RuleBase" id="RU362131"/>
    </source>
</evidence>
<evidence type="ECO:0000256" key="4">
    <source>
        <dbReference type="SAM" id="MobiDB-lite"/>
    </source>
</evidence>
<evidence type="ECO:0000269" key="5">
    <source>
    </source>
</evidence>
<evidence type="ECO:0000303" key="6">
    <source>
    </source>
</evidence>
<evidence type="ECO:0000305" key="7"/>
<evidence type="ECO:0000305" key="8">
    <source>
    </source>
</evidence>
<evidence type="ECO:0000312" key="9">
    <source>
        <dbReference type="EMBL" id="CAB39006.2"/>
    </source>
</evidence>
<evidence type="ECO:0000312" key="10">
    <source>
        <dbReference type="Proteomes" id="UP000001450"/>
    </source>
</evidence>
<sequence>MKITSLHFLIFHKNLNYVSSKVKAKKIFYQRALNNIYLCTIRTMIVDIAEIKKRDNHALDTQESQELVNKIKEIKNSDEQNNSNNNNNNSSSSNFCSNNNSPFSHKETKLMVKEEVPNSIVKNILNNNSCATSIINNKFYTQINNIIPVKPEAMKEENINVSTVNTENDISKEKKENSHYFCDEIKVMKKEYSKDDFVTDVKLEMNDKEEEEEEKQKIGQESTHINIKVEKDTFNECNNSNVNEKKRNRSVDIHNELSNKRILTEDVVVKCNIKNDVKIIVTWNMNSITVRYKNKKKWDEFMNFFNNLNADVLCFQEVRLPAMNLSEPCDNKNKNKNKNDGIRDRGKIKNSDQKSLADYEIMEQILNDDFKDYNAYFSLANIKYSGQLVLVKKNIHIESIRYNLFFENNAHIHHDEGRVILVEFSNFFLLSTYTPNNGFDHVKFERRRLFDEQLQKFVTILRNEKQKPLVWTGDLNIAPEDIDLSHPAEFRRMKKGNVPKEFIGQPGCTDFERKNFQKILTAGNLVDSYRYLQNIKLNEDKKNNIKHTPNINDNIYTWRCPFLLGKSCNKAMRIDHFIVSKEFLNRINKIHIQGFSVFHNNFYGSDHCPVILYLKNE</sequence>
<reference evidence="10" key="1">
    <citation type="journal article" date="1999" name="Nature">
        <title>The complete nucleotide sequence of chromosome 3 of Plasmodium falciparum.</title>
        <authorList>
            <person name="Bowman S."/>
            <person name="Lawson D."/>
            <person name="Basham D."/>
            <person name="Brown D."/>
            <person name="Chillingworth T."/>
            <person name="Churcher C.M."/>
            <person name="Craig A."/>
            <person name="Davies R.M."/>
            <person name="Devlin K."/>
            <person name="Feltwell T."/>
            <person name="Gentles S."/>
            <person name="Gwilliam R."/>
            <person name="Hamlin N."/>
            <person name="Harris D."/>
            <person name="Holroyd S."/>
            <person name="Hornsby T."/>
            <person name="Horrocks P."/>
            <person name="Jagels K."/>
            <person name="Jassal B."/>
            <person name="Kyes S."/>
            <person name="McLean J."/>
            <person name="Moule S."/>
            <person name="Mungall K.L."/>
            <person name="Murphy L."/>
            <person name="Oliver K."/>
            <person name="Quail M.A."/>
            <person name="Rajandream M.A."/>
            <person name="Rutter S."/>
            <person name="Skelton J."/>
            <person name="Squares R."/>
            <person name="Squares S."/>
            <person name="Sulston J.E."/>
            <person name="Whitehead S."/>
            <person name="Woodward J.R."/>
            <person name="Newbold C."/>
            <person name="Barrell B.G."/>
        </authorList>
    </citation>
    <scope>NUCLEOTIDE SEQUENCE [LARGE SCALE GENOMIC DNA]</scope>
    <source>
        <strain evidence="10">3D7</strain>
    </source>
</reference>
<reference evidence="10" key="2">
    <citation type="journal article" date="2002" name="Nature">
        <title>Genome sequence of the human malaria parasite Plasmodium falciparum.</title>
        <authorList>
            <person name="Gardner M.J."/>
            <person name="Hall N."/>
            <person name="Fung E."/>
            <person name="White O."/>
            <person name="Berriman M."/>
            <person name="Hyman R.W."/>
            <person name="Carlton J.M."/>
            <person name="Pain A."/>
            <person name="Nelson K.E."/>
            <person name="Bowman S."/>
            <person name="Paulsen I.T."/>
            <person name="James K.D."/>
            <person name="Eisen J.A."/>
            <person name="Rutherford K.M."/>
            <person name="Salzberg S.L."/>
            <person name="Craig A."/>
            <person name="Kyes S."/>
            <person name="Chan M.-S."/>
            <person name="Nene V."/>
            <person name="Shallom S.J."/>
            <person name="Suh B."/>
            <person name="Peterson J."/>
            <person name="Angiuoli S."/>
            <person name="Pertea M."/>
            <person name="Allen J."/>
            <person name="Selengut J."/>
            <person name="Haft D."/>
            <person name="Mather M.W."/>
            <person name="Vaidya A.B."/>
            <person name="Martin D.M.A."/>
            <person name="Fairlamb A.H."/>
            <person name="Fraunholz M.J."/>
            <person name="Roos D.S."/>
            <person name="Ralph S.A."/>
            <person name="McFadden G.I."/>
            <person name="Cummings L.M."/>
            <person name="Subramanian G.M."/>
            <person name="Mungall C."/>
            <person name="Venter J.C."/>
            <person name="Carucci D.J."/>
            <person name="Hoffman S.L."/>
            <person name="Newbold C."/>
            <person name="Davis R.W."/>
            <person name="Fraser C.M."/>
            <person name="Barrell B.G."/>
        </authorList>
    </citation>
    <scope>NUCLEOTIDE SEQUENCE [LARGE SCALE GENOMIC DNA]</scope>
    <source>
        <strain evidence="10">3D7</strain>
    </source>
</reference>
<reference evidence="10" key="3">
    <citation type="journal article" date="2002" name="Nature">
        <title>Sequence of Plasmodium falciparum chromosomes 1, 3-9 and 13.</title>
        <authorList>
            <person name="Hall N."/>
            <person name="Pain A."/>
            <person name="Berriman M."/>
            <person name="Churcher C.M."/>
            <person name="Harris B."/>
            <person name="Harris D."/>
            <person name="Mungall K.L."/>
            <person name="Bowman S."/>
            <person name="Atkin R."/>
            <person name="Baker S."/>
            <person name="Barron A."/>
            <person name="Brooks K."/>
            <person name="Buckee C.O."/>
            <person name="Burrows C."/>
            <person name="Cherevach I."/>
            <person name="Chillingworth C."/>
            <person name="Chillingworth T."/>
            <person name="Christodoulou Z."/>
            <person name="Clark L."/>
            <person name="Clark R."/>
            <person name="Corton C."/>
            <person name="Cronin A."/>
            <person name="Davies R.M."/>
            <person name="Davis P."/>
            <person name="Dear P."/>
            <person name="Dearden F."/>
            <person name="Doggett J."/>
            <person name="Feltwell T."/>
            <person name="Goble A."/>
            <person name="Goodhead I."/>
            <person name="Gwilliam R."/>
            <person name="Hamlin N."/>
            <person name="Hance Z."/>
            <person name="Harper D."/>
            <person name="Hauser H."/>
            <person name="Hornsby T."/>
            <person name="Holroyd S."/>
            <person name="Horrocks P."/>
            <person name="Humphray S."/>
            <person name="Jagels K."/>
            <person name="James K.D."/>
            <person name="Johnson D."/>
            <person name="Kerhornou A."/>
            <person name="Knights A."/>
            <person name="Konfortov B."/>
            <person name="Kyes S."/>
            <person name="Larke N."/>
            <person name="Lawson D."/>
            <person name="Lennard N."/>
            <person name="Line A."/>
            <person name="Maddison M."/>
            <person name="Mclean J."/>
            <person name="Mooney P."/>
            <person name="Moule S."/>
            <person name="Murphy L."/>
            <person name="Oliver K."/>
            <person name="Ormond D."/>
            <person name="Price C."/>
            <person name="Quail M.A."/>
            <person name="Rabbinowitsch E."/>
            <person name="Rajandream M.A."/>
            <person name="Rutter S."/>
            <person name="Rutherford K.M."/>
            <person name="Sanders M."/>
            <person name="Simmonds M."/>
            <person name="Seeger K."/>
            <person name="Sharp S."/>
            <person name="Smith R."/>
            <person name="Squares R."/>
            <person name="Squares S."/>
            <person name="Stevens K."/>
            <person name="Taylor K."/>
            <person name="Tivey A."/>
            <person name="Unwin L."/>
            <person name="Whitehead S."/>
            <person name="Woodward J.R."/>
            <person name="Sulston J.E."/>
            <person name="Craig A."/>
            <person name="Newbold C."/>
            <person name="Barrell B.G."/>
        </authorList>
    </citation>
    <scope>NUCLEOTIDE SEQUENCE [LARGE SCALE GENOMIC DNA]</scope>
    <source>
        <strain evidence="10">3D7</strain>
    </source>
</reference>
<reference evidence="7" key="4">
    <citation type="journal article" date="2021" name="DNA Repair">
        <title>Plasmodium Ape1 is a multifunctional enzyme in mitochondrial base excision repair and is required for efficient transition from liver to blood stage infection.</title>
        <authorList>
            <person name="Verma N."/>
            <person name="Shukla H."/>
            <person name="Tiwari A."/>
            <person name="Mishra S."/>
            <person name="Habib S."/>
        </authorList>
    </citation>
    <scope>FUNCTION</scope>
    <scope>CATALYTIC ACTIVITY</scope>
    <scope>COFACTOR</scope>
    <scope>ACTIVITY REGULATION</scope>
    <scope>BIOPHYSICOCHEMICAL PROPERTIES</scope>
    <scope>SUBCELLULAR LOCATION</scope>
    <scope>DEVELOPMENTAL STAGE</scope>
    <scope>PROTEOLYTIC CLEAVAGE</scope>
</reference>
<name>APEX_PLAF7</name>
<dbReference type="EC" id="3.1.11.2" evidence="5"/>
<dbReference type="EMBL" id="AL844502">
    <property type="protein sequence ID" value="CAB39006.2"/>
    <property type="molecule type" value="Genomic_DNA"/>
</dbReference>
<dbReference type="RefSeq" id="XP_001351132.1">
    <property type="nucleotide sequence ID" value="XM_001351096.1"/>
</dbReference>
<dbReference type="SMR" id="O97240"/>
<dbReference type="FunCoup" id="O97240">
    <property type="interactions" value="16"/>
</dbReference>
<dbReference type="STRING" id="36329.O97240"/>
<dbReference type="SwissPalm" id="O97240"/>
<dbReference type="PaxDb" id="5833-PFC0250c"/>
<dbReference type="EnsemblProtists" id="CAB39006">
    <property type="protein sequence ID" value="CAB39006"/>
    <property type="gene ID" value="PF3D7_0305600"/>
</dbReference>
<dbReference type="GeneID" id="814374"/>
<dbReference type="KEGG" id="pfa:PF3D7_0305600"/>
<dbReference type="VEuPathDB" id="PlasmoDB:PF3D7_0305600"/>
<dbReference type="HOGENOM" id="CLU_443130_0_0_1"/>
<dbReference type="InParanoid" id="O97240"/>
<dbReference type="OMA" id="IMSWNIN"/>
<dbReference type="OrthoDB" id="498125at2759"/>
<dbReference type="PhylomeDB" id="O97240"/>
<dbReference type="Reactome" id="R-PFA-110357">
    <property type="pathway name" value="Displacement of DNA glycosylase by APEX1"/>
</dbReference>
<dbReference type="Reactome" id="R-PFA-110373">
    <property type="pathway name" value="Resolution of AP sites via the multiple-nucleotide patch replacement pathway"/>
</dbReference>
<dbReference type="Reactome" id="R-PFA-5651801">
    <property type="pathway name" value="PCNA-Dependent Long Patch Base Excision Repair"/>
</dbReference>
<dbReference type="Reactome" id="R-PFA-73933">
    <property type="pathway name" value="Resolution of Abasic Sites (AP sites)"/>
</dbReference>
<dbReference type="Proteomes" id="UP000001450">
    <property type="component" value="Chromosome 3"/>
</dbReference>
<dbReference type="GO" id="GO:0005739">
    <property type="term" value="C:mitochondrion"/>
    <property type="evidence" value="ECO:0000314"/>
    <property type="project" value="UniProtKB"/>
</dbReference>
<dbReference type="GO" id="GO:0005634">
    <property type="term" value="C:nucleus"/>
    <property type="evidence" value="ECO:0000318"/>
    <property type="project" value="GO_Central"/>
</dbReference>
<dbReference type="GO" id="GO:0003906">
    <property type="term" value="F:DNA-(apurinic or apyrimidinic site) endonuclease activity"/>
    <property type="evidence" value="ECO:0000314"/>
    <property type="project" value="UniProtKB"/>
</dbReference>
<dbReference type="GO" id="GO:0008311">
    <property type="term" value="F:double-stranded DNA 3'-5' DNA exonuclease activity"/>
    <property type="evidence" value="ECO:0000318"/>
    <property type="project" value="GO_Central"/>
</dbReference>
<dbReference type="GO" id="GO:0004519">
    <property type="term" value="F:endonuclease activity"/>
    <property type="evidence" value="ECO:0007669"/>
    <property type="project" value="UniProtKB-KW"/>
</dbReference>
<dbReference type="GO" id="GO:0046872">
    <property type="term" value="F:metal ion binding"/>
    <property type="evidence" value="ECO:0007669"/>
    <property type="project" value="UniProtKB-KW"/>
</dbReference>
<dbReference type="GO" id="GO:0008081">
    <property type="term" value="F:phosphoric diester hydrolase activity"/>
    <property type="evidence" value="ECO:0000314"/>
    <property type="project" value="UniProtKB"/>
</dbReference>
<dbReference type="GO" id="GO:0004532">
    <property type="term" value="F:RNA exonuclease activity"/>
    <property type="evidence" value="ECO:0000314"/>
    <property type="project" value="UniProtKB"/>
</dbReference>
<dbReference type="GO" id="GO:0006284">
    <property type="term" value="P:base-excision repair"/>
    <property type="evidence" value="ECO:0000314"/>
    <property type="project" value="UniProtKB"/>
</dbReference>
<dbReference type="GO" id="GO:0006281">
    <property type="term" value="P:DNA repair"/>
    <property type="evidence" value="ECO:0000250"/>
    <property type="project" value="GeneDB"/>
</dbReference>
<dbReference type="GO" id="GO:0006289">
    <property type="term" value="P:nucleotide-excision repair"/>
    <property type="evidence" value="ECO:0000314"/>
    <property type="project" value="UniProtKB"/>
</dbReference>
<dbReference type="Gene3D" id="3.60.10.10">
    <property type="entry name" value="Endonuclease/exonuclease/phosphatase"/>
    <property type="match status" value="1"/>
</dbReference>
<dbReference type="InterPro" id="IPR004808">
    <property type="entry name" value="AP_endonuc_1"/>
</dbReference>
<dbReference type="InterPro" id="IPR036691">
    <property type="entry name" value="Endo/exonu/phosph_ase_sf"/>
</dbReference>
<dbReference type="InterPro" id="IPR005135">
    <property type="entry name" value="Endo/exonuclease/phosphatase"/>
</dbReference>
<dbReference type="NCBIfam" id="TIGR00633">
    <property type="entry name" value="xth"/>
    <property type="match status" value="1"/>
</dbReference>
<dbReference type="PANTHER" id="PTHR22748">
    <property type="entry name" value="AP ENDONUCLEASE"/>
    <property type="match status" value="1"/>
</dbReference>
<dbReference type="PANTHER" id="PTHR22748:SF6">
    <property type="entry name" value="DNA-(APURINIC OR APYRIMIDINIC SITE) ENDONUCLEASE"/>
    <property type="match status" value="1"/>
</dbReference>
<dbReference type="Pfam" id="PF03372">
    <property type="entry name" value="Exo_endo_phos"/>
    <property type="match status" value="1"/>
</dbReference>
<dbReference type="SUPFAM" id="SSF56219">
    <property type="entry name" value="DNase I-like"/>
    <property type="match status" value="1"/>
</dbReference>
<dbReference type="PROSITE" id="PS51435">
    <property type="entry name" value="AP_NUCLEASE_F1_4"/>
    <property type="match status" value="1"/>
</dbReference>
<feature type="transit peptide" description="Mitochondrion" evidence="8">
    <location>
        <begin position="1"/>
        <end status="unknown"/>
    </location>
</feature>
<feature type="chain" id="PRO_0000456878" description="DNA-(apurinic or apyrimidinic site) endonuclease">
    <location>
        <begin status="unknown"/>
        <end position="617"/>
    </location>
</feature>
<feature type="region of interest" description="Disordered" evidence="4">
    <location>
        <begin position="74"/>
        <end position="99"/>
    </location>
</feature>
<feature type="region of interest" description="Disordered" evidence="4">
    <location>
        <begin position="326"/>
        <end position="349"/>
    </location>
</feature>
<feature type="compositionally biased region" description="Low complexity" evidence="4">
    <location>
        <begin position="81"/>
        <end position="99"/>
    </location>
</feature>
<feature type="compositionally biased region" description="Basic and acidic residues" evidence="4">
    <location>
        <begin position="329"/>
        <end position="349"/>
    </location>
</feature>
<feature type="active site" description="Proton acceptor" evidence="2">
    <location>
        <position position="607"/>
    </location>
</feature>
<feature type="binding site" evidence="2">
    <location>
        <position position="284"/>
    </location>
    <ligand>
        <name>Mg(2+)</name>
        <dbReference type="ChEBI" id="CHEBI:18420"/>
    </ligand>
</feature>
<feature type="binding site" evidence="2">
    <location>
        <position position="317"/>
    </location>
    <ligand>
        <name>Mg(2+)</name>
        <dbReference type="ChEBI" id="CHEBI:18420"/>
    </ligand>
</feature>
<feature type="binding site" evidence="2">
    <location>
        <position position="474"/>
    </location>
    <ligand>
        <name>Mg(2+)</name>
        <dbReference type="ChEBI" id="CHEBI:18420"/>
    </ligand>
</feature>
<feature type="binding site" evidence="2">
    <location>
        <position position="476"/>
    </location>
    <ligand>
        <name>Mg(2+)</name>
        <dbReference type="ChEBI" id="CHEBI:18420"/>
    </ligand>
</feature>
<feature type="binding site" evidence="2">
    <location>
        <position position="606"/>
    </location>
    <ligand>
        <name>Mg(2+)</name>
        <dbReference type="ChEBI" id="CHEBI:18420"/>
    </ligand>
</feature>
<feature type="binding site" evidence="2">
    <location>
        <position position="607"/>
    </location>
    <ligand>
        <name>Mg(2+)</name>
        <dbReference type="ChEBI" id="CHEBI:18420"/>
    </ligand>
</feature>
<comment type="function">
    <text evidence="1 5">Multifunctional protein that plays a central role in mitochondrial DNA base excision repair (BER) pathway induced by oxidative stress. Has apurinic/apyrimidinic (AP) endonuclease activity towards double-stranded DNA (dsDNA) (PubMed:33743509). Has nucleotide incision repair (NIR) activity; acts on dsDNA with oxidized bases thymine glycol and 5,6-dihydro-2'-deoxyuridine (PubMed:33743509). Has 3'-5' exonuclease; can use dsDNA templates with 3'-OH termini including blunt-end, gapped and mismatched 3'-recessed (PubMed:33743509). Has 3'-phosphatase activity; cleaves 3'-phosphate from blunt, recessed and gapped dsDNA templates, followed by 3'-5' exonuclease activity (PubMed:33743509). Has RNase H-like activity; cleaves RNA on 3'-recessed RNA-DNA duplex (PubMed:33743509). Plays a role in merosome infection of host erythrocytes (By similarity).</text>
</comment>
<comment type="catalytic activity">
    <reaction evidence="5">
        <text>Exonucleolytic cleavage in the 3'- to 5'-direction to yield nucleoside 5'-phosphates.</text>
        <dbReference type="EC" id="3.1.11.2"/>
    </reaction>
</comment>
<comment type="cofactor">
    <cofactor evidence="3 5">
        <name>Mg(2+)</name>
        <dbReference type="ChEBI" id="CHEBI:18420"/>
    </cofactor>
    <cofactor evidence="3 5">
        <name>Mn(2+)</name>
        <dbReference type="ChEBI" id="CHEBI:29035"/>
    </cofactor>
    <text evidence="3">Probably binds two magnesium or manganese ions per subunit.</text>
</comment>
<comment type="activity regulation">
    <text evidence="5">Apurinic/apyrimidinic (AP) endonuclease activity is maximal at low Mg(2+) (0.5-2 mM) with no activity seen at high concentrations (more than 10 mM) (PubMed:33743509). 3'-5' exonuclease activity is maximal in the range of 0.5-2 mM Mg(2+) with activity seen up to 10 mM Mg(2+) (PubMed:33743509).</text>
</comment>
<comment type="biophysicochemical properties">
    <kinetics>
        <KM evidence="5">4.69 uM for DNA gapped template with 3'-OH at the gap (at pH 7.5 and 37 degrees Celsius)</KM>
        <text evidence="5">kcat is 0.169 sec(-1) with DNA gapped template with 3'-OH at the gap as substrate (at pH 7.5 and 37 degrees Celsius).</text>
    </kinetics>
    <phDependence>
        <text evidence="5">Optimum pH is 6-8.5 for apurinic/apyrimidinic (AP) endonuclease activity (PubMed:33743509). Optimum pH is 8-8.5 for 3'-5' exonuclease activity (PubMed:33743509). Optimum pH is 8-8.5 for nucleotide incision repair (NIR) cleavage activity (PubMed:33743509).</text>
    </phDependence>
</comment>
<comment type="subcellular location">
    <subcellularLocation>
        <location evidence="5">Mitochondrion</location>
    </subcellularLocation>
</comment>
<comment type="developmental stage">
    <text evidence="5">Expressed during the asexual blood stage, including trophozoites (at protein level).</text>
</comment>
<comment type="PTM">
    <text evidence="5">May be proteolytically cleaved into a 64 kDa form.</text>
</comment>
<comment type="similarity">
    <text evidence="3">Belongs to the DNA repair enzymes AP/ExoA family.</text>
</comment>
<accession>O97240</accession>
<organism evidence="10">
    <name type="scientific">Plasmodium falciparum (isolate 3D7)</name>
    <dbReference type="NCBI Taxonomy" id="36329"/>
    <lineage>
        <taxon>Eukaryota</taxon>
        <taxon>Sar</taxon>
        <taxon>Alveolata</taxon>
        <taxon>Apicomplexa</taxon>
        <taxon>Aconoidasida</taxon>
        <taxon>Haemosporida</taxon>
        <taxon>Plasmodiidae</taxon>
        <taxon>Plasmodium</taxon>
        <taxon>Plasmodium (Laverania)</taxon>
    </lineage>
</organism>